<name>HES1_HUMAN</name>
<gene>
    <name type="primary">HES1</name>
    <name type="synonym">BHLHB39</name>
    <name type="synonym">HL</name>
    <name type="synonym">HRY</name>
</gene>
<proteinExistence type="evidence at protein level"/>
<reference key="1">
    <citation type="journal article" date="1994" name="Genomics">
        <title>Genomic cloning and chromosomal localization of HRY, the human homolog to the Drosophila segmentation gene, hairy.</title>
        <authorList>
            <person name="Feder J.N."/>
            <person name="Li L."/>
            <person name="Jan L.Y."/>
            <person name="Jan Y.-N."/>
        </authorList>
    </citation>
    <scope>NUCLEOTIDE SEQUENCE [GENOMIC DNA]</scope>
</reference>
<reference key="2">
    <citation type="submission" date="2000-05" db="EMBL/GenBank/DDBJ databases">
        <title>Functional analysis of human HRY in Drosophila.</title>
        <authorList>
            <person name="Yao J."/>
            <person name="Yeung S."/>
            <person name="Sun H."/>
            <person name="Chen N."/>
        </authorList>
    </citation>
    <scope>NUCLEOTIDE SEQUENCE [MRNA]</scope>
    <source>
        <tissue>Kidney</tissue>
    </source>
</reference>
<reference key="3">
    <citation type="journal article" date="2004" name="Nat. Genet.">
        <title>Complete sequencing and characterization of 21,243 full-length human cDNAs.</title>
        <authorList>
            <person name="Ota T."/>
            <person name="Suzuki Y."/>
            <person name="Nishikawa T."/>
            <person name="Otsuki T."/>
            <person name="Sugiyama T."/>
            <person name="Irie R."/>
            <person name="Wakamatsu A."/>
            <person name="Hayashi K."/>
            <person name="Sato H."/>
            <person name="Nagai K."/>
            <person name="Kimura K."/>
            <person name="Makita H."/>
            <person name="Sekine M."/>
            <person name="Obayashi M."/>
            <person name="Nishi T."/>
            <person name="Shibahara T."/>
            <person name="Tanaka T."/>
            <person name="Ishii S."/>
            <person name="Yamamoto J."/>
            <person name="Saito K."/>
            <person name="Kawai Y."/>
            <person name="Isono Y."/>
            <person name="Nakamura Y."/>
            <person name="Nagahari K."/>
            <person name="Murakami K."/>
            <person name="Yasuda T."/>
            <person name="Iwayanagi T."/>
            <person name="Wagatsuma M."/>
            <person name="Shiratori A."/>
            <person name="Sudo H."/>
            <person name="Hosoiri T."/>
            <person name="Kaku Y."/>
            <person name="Kodaira H."/>
            <person name="Kondo H."/>
            <person name="Sugawara M."/>
            <person name="Takahashi M."/>
            <person name="Kanda K."/>
            <person name="Yokoi T."/>
            <person name="Furuya T."/>
            <person name="Kikkawa E."/>
            <person name="Omura Y."/>
            <person name="Abe K."/>
            <person name="Kamihara K."/>
            <person name="Katsuta N."/>
            <person name="Sato K."/>
            <person name="Tanikawa M."/>
            <person name="Yamazaki M."/>
            <person name="Ninomiya K."/>
            <person name="Ishibashi T."/>
            <person name="Yamashita H."/>
            <person name="Murakawa K."/>
            <person name="Fujimori K."/>
            <person name="Tanai H."/>
            <person name="Kimata M."/>
            <person name="Watanabe M."/>
            <person name="Hiraoka S."/>
            <person name="Chiba Y."/>
            <person name="Ishida S."/>
            <person name="Ono Y."/>
            <person name="Takiguchi S."/>
            <person name="Watanabe S."/>
            <person name="Yosida M."/>
            <person name="Hotuta T."/>
            <person name="Kusano J."/>
            <person name="Kanehori K."/>
            <person name="Takahashi-Fujii A."/>
            <person name="Hara H."/>
            <person name="Tanase T.-O."/>
            <person name="Nomura Y."/>
            <person name="Togiya S."/>
            <person name="Komai F."/>
            <person name="Hara R."/>
            <person name="Takeuchi K."/>
            <person name="Arita M."/>
            <person name="Imose N."/>
            <person name="Musashino K."/>
            <person name="Yuuki H."/>
            <person name="Oshima A."/>
            <person name="Sasaki N."/>
            <person name="Aotsuka S."/>
            <person name="Yoshikawa Y."/>
            <person name="Matsunawa H."/>
            <person name="Ichihara T."/>
            <person name="Shiohata N."/>
            <person name="Sano S."/>
            <person name="Moriya S."/>
            <person name="Momiyama H."/>
            <person name="Satoh N."/>
            <person name="Takami S."/>
            <person name="Terashima Y."/>
            <person name="Suzuki O."/>
            <person name="Nakagawa S."/>
            <person name="Senoh A."/>
            <person name="Mizoguchi H."/>
            <person name="Goto Y."/>
            <person name="Shimizu F."/>
            <person name="Wakebe H."/>
            <person name="Hishigaki H."/>
            <person name="Watanabe T."/>
            <person name="Sugiyama A."/>
            <person name="Takemoto M."/>
            <person name="Kawakami B."/>
            <person name="Yamazaki M."/>
            <person name="Watanabe K."/>
            <person name="Kumagai A."/>
            <person name="Itakura S."/>
            <person name="Fukuzumi Y."/>
            <person name="Fujimori Y."/>
            <person name="Komiyama M."/>
            <person name="Tashiro H."/>
            <person name="Tanigami A."/>
            <person name="Fujiwara T."/>
            <person name="Ono T."/>
            <person name="Yamada K."/>
            <person name="Fujii Y."/>
            <person name="Ozaki K."/>
            <person name="Hirao M."/>
            <person name="Ohmori Y."/>
            <person name="Kawabata A."/>
            <person name="Hikiji T."/>
            <person name="Kobatake N."/>
            <person name="Inagaki H."/>
            <person name="Ikema Y."/>
            <person name="Okamoto S."/>
            <person name="Okitani R."/>
            <person name="Kawakami T."/>
            <person name="Noguchi S."/>
            <person name="Itoh T."/>
            <person name="Shigeta K."/>
            <person name="Senba T."/>
            <person name="Matsumura K."/>
            <person name="Nakajima Y."/>
            <person name="Mizuno T."/>
            <person name="Morinaga M."/>
            <person name="Sasaki M."/>
            <person name="Togashi T."/>
            <person name="Oyama M."/>
            <person name="Hata H."/>
            <person name="Watanabe M."/>
            <person name="Komatsu T."/>
            <person name="Mizushima-Sugano J."/>
            <person name="Satoh T."/>
            <person name="Shirai Y."/>
            <person name="Takahashi Y."/>
            <person name="Nakagawa K."/>
            <person name="Okumura K."/>
            <person name="Nagase T."/>
            <person name="Nomura N."/>
            <person name="Kikuchi H."/>
            <person name="Masuho Y."/>
            <person name="Yamashita R."/>
            <person name="Nakai K."/>
            <person name="Yada T."/>
            <person name="Nakamura Y."/>
            <person name="Ohara O."/>
            <person name="Isogai T."/>
            <person name="Sugano S."/>
        </authorList>
    </citation>
    <scope>NUCLEOTIDE SEQUENCE [LARGE SCALE MRNA]</scope>
</reference>
<reference key="4">
    <citation type="submission" date="2004-06" db="EMBL/GenBank/DDBJ databases">
        <title>Cloning of human full open reading frames in Gateway(TM) system entry vector (pDONR201).</title>
        <authorList>
            <person name="Ebert L."/>
            <person name="Schick M."/>
            <person name="Neubert P."/>
            <person name="Schatten R."/>
            <person name="Henze S."/>
            <person name="Korn B."/>
        </authorList>
    </citation>
    <scope>NUCLEOTIDE SEQUENCE [LARGE SCALE MRNA]</scope>
</reference>
<reference key="5">
    <citation type="journal article" date="2003" name="Biochem. Biophys. Res. Commun.">
        <title>Human Sir2-related protein SIRT1 associates with the bHLH repressors HES1 and HEY2 and is involved in HES1- and HEY2-mediated transcriptional repression.</title>
        <authorList>
            <person name="Takata T."/>
            <person name="Ishikawa F."/>
        </authorList>
    </citation>
    <scope>INTERACTION WITH SIRT1</scope>
</reference>
<reference key="6">
    <citation type="journal article" date="2008" name="Blood">
        <title>HES1 is a novel interactor of the Fanconi anemia core complex.</title>
        <authorList>
            <person name="Tremblay C.S."/>
            <person name="Huang F.F."/>
            <person name="Habi O."/>
            <person name="Huard C.C."/>
            <person name="Godin C."/>
            <person name="Levesque G."/>
            <person name="Carreau M."/>
        </authorList>
    </citation>
    <scope>FUNCTION</scope>
    <scope>INTERACTION WITH FA COMPLEX</scope>
</reference>
<reference key="7">
    <citation type="journal article" date="2009" name="Anal. Chem.">
        <title>Lys-N and trypsin cover complementary parts of the phosphoproteome in a refined SCX-based approach.</title>
        <authorList>
            <person name="Gauci S."/>
            <person name="Helbig A.O."/>
            <person name="Slijper M."/>
            <person name="Krijgsveld J."/>
            <person name="Heck A.J."/>
            <person name="Mohammed S."/>
        </authorList>
    </citation>
    <scope>IDENTIFICATION BY MASS SPECTROMETRY [LARGE SCALE ANALYSIS]</scope>
</reference>
<reference key="8">
    <citation type="journal article" date="2013" name="J. Proteome Res.">
        <title>Toward a comprehensive characterization of a human cancer cell phosphoproteome.</title>
        <authorList>
            <person name="Zhou H."/>
            <person name="Di Palma S."/>
            <person name="Preisinger C."/>
            <person name="Peng M."/>
            <person name="Polat A.N."/>
            <person name="Heck A.J."/>
            <person name="Mohammed S."/>
        </authorList>
    </citation>
    <scope>IDENTIFICATION BY MASS SPECTROMETRY [LARGE SCALE ANALYSIS]</scope>
    <source>
        <tissue>Erythroleukemia</tissue>
    </source>
</reference>
<reference key="9">
    <citation type="journal article" date="2014" name="J. Proteomics">
        <title>An enzyme assisted RP-RPLC approach for in-depth analysis of human liver phosphoproteome.</title>
        <authorList>
            <person name="Bian Y."/>
            <person name="Song C."/>
            <person name="Cheng K."/>
            <person name="Dong M."/>
            <person name="Wang F."/>
            <person name="Huang J."/>
            <person name="Sun D."/>
            <person name="Wang L."/>
            <person name="Ye M."/>
            <person name="Zou H."/>
        </authorList>
    </citation>
    <scope>IDENTIFICATION BY MASS SPECTROMETRY [LARGE SCALE ANALYSIS]</scope>
    <source>
        <tissue>Liver</tissue>
    </source>
</reference>
<reference key="10">
    <citation type="journal article" date="2017" name="PLoS Pathog.">
        <title>Human cytomegalovirus IE1 downregulates Hes1 in neural progenitor cells as a potential E3 ubiquitin ligase.</title>
        <authorList>
            <person name="Liu X.J."/>
            <person name="Yang B."/>
            <person name="Huang S.N."/>
            <person name="Wu C.C."/>
            <person name="Li X.J."/>
            <person name="Cheng S."/>
            <person name="Jiang X."/>
            <person name="Hu F."/>
            <person name="Ming Y.Z."/>
            <person name="Nevels M."/>
            <person name="Britt W.J."/>
            <person name="Rayner S."/>
            <person name="Tang Q."/>
            <person name="Zeng W.B."/>
            <person name="Zhao F."/>
            <person name="Luo M.H."/>
        </authorList>
    </citation>
    <scope>SUBCELLULAR LOCATION</scope>
    <scope>UBIQUITINATION (MICROBIAL INFECTION)</scope>
</reference>
<dbReference type="EMBL" id="L19314">
    <property type="protein sequence ID" value="AAA65220.1"/>
    <property type="molecule type" value="Genomic_DNA"/>
</dbReference>
<dbReference type="EMBL" id="AF264785">
    <property type="protein sequence ID" value="AAF73060.1"/>
    <property type="molecule type" value="mRNA"/>
</dbReference>
<dbReference type="EMBL" id="AK000415">
    <property type="protein sequence ID" value="BAA91149.1"/>
    <property type="molecule type" value="mRNA"/>
</dbReference>
<dbReference type="EMBL" id="CR541843">
    <property type="protein sequence ID" value="CAG46641.1"/>
    <property type="molecule type" value="mRNA"/>
</dbReference>
<dbReference type="CCDS" id="CCDS3305.1"/>
<dbReference type="PIR" id="A53027">
    <property type="entry name" value="A53027"/>
</dbReference>
<dbReference type="RefSeq" id="NP_005515.1">
    <property type="nucleotide sequence ID" value="NM_005524.4"/>
</dbReference>
<dbReference type="PDB" id="2MH3">
    <property type="method" value="NMR"/>
    <property type="chains" value="A/B=27-95"/>
</dbReference>
<dbReference type="PDB" id="7C4O">
    <property type="method" value="NMR"/>
    <property type="chains" value="A/B=103-150"/>
</dbReference>
<dbReference type="PDBsum" id="2MH3"/>
<dbReference type="PDBsum" id="7C4O"/>
<dbReference type="BMRB" id="Q14469"/>
<dbReference type="SMR" id="Q14469"/>
<dbReference type="BioGRID" id="109514">
    <property type="interactions" value="52"/>
</dbReference>
<dbReference type="CORUM" id="Q14469"/>
<dbReference type="ELM" id="Q14469"/>
<dbReference type="FunCoup" id="Q14469">
    <property type="interactions" value="1885"/>
</dbReference>
<dbReference type="IntAct" id="Q14469">
    <property type="interactions" value="19"/>
</dbReference>
<dbReference type="MINT" id="Q14469"/>
<dbReference type="STRING" id="9606.ENSP00000232424"/>
<dbReference type="ChEMBL" id="CHEMBL3734643"/>
<dbReference type="GlyGen" id="Q14469">
    <property type="glycosylation" value="3 sites, 1 O-linked glycan (2 sites)"/>
</dbReference>
<dbReference type="iPTMnet" id="Q14469"/>
<dbReference type="PhosphoSitePlus" id="Q14469"/>
<dbReference type="BioMuta" id="HES1"/>
<dbReference type="DMDM" id="3913825"/>
<dbReference type="jPOST" id="Q14469"/>
<dbReference type="MassIVE" id="Q14469"/>
<dbReference type="PaxDb" id="9606-ENSP00000232424"/>
<dbReference type="PeptideAtlas" id="Q14469"/>
<dbReference type="ProteomicsDB" id="60000"/>
<dbReference type="Pumba" id="Q14469"/>
<dbReference type="Antibodypedia" id="19442">
    <property type="antibodies" value="650 antibodies from 40 providers"/>
</dbReference>
<dbReference type="DNASU" id="3280"/>
<dbReference type="Ensembl" id="ENST00000232424.4">
    <property type="protein sequence ID" value="ENSP00000232424.3"/>
    <property type="gene ID" value="ENSG00000114315.4"/>
</dbReference>
<dbReference type="GeneID" id="3280"/>
<dbReference type="KEGG" id="hsa:3280"/>
<dbReference type="MANE-Select" id="ENST00000232424.4">
    <property type="protein sequence ID" value="ENSP00000232424.3"/>
    <property type="RefSeq nucleotide sequence ID" value="NM_005524.4"/>
    <property type="RefSeq protein sequence ID" value="NP_005515.1"/>
</dbReference>
<dbReference type="UCSC" id="uc003ftq.3">
    <property type="organism name" value="human"/>
</dbReference>
<dbReference type="AGR" id="HGNC:5192"/>
<dbReference type="CTD" id="3280"/>
<dbReference type="DisGeNET" id="3280"/>
<dbReference type="GeneCards" id="HES1"/>
<dbReference type="HGNC" id="HGNC:5192">
    <property type="gene designation" value="HES1"/>
</dbReference>
<dbReference type="HPA" id="ENSG00000114315">
    <property type="expression patterns" value="Low tissue specificity"/>
</dbReference>
<dbReference type="MalaCards" id="HES1"/>
<dbReference type="MIM" id="139605">
    <property type="type" value="gene"/>
</dbReference>
<dbReference type="neXtProt" id="NX_Q14469"/>
<dbReference type="OpenTargets" id="ENSG00000114315"/>
<dbReference type="PharmGKB" id="PA29465"/>
<dbReference type="VEuPathDB" id="HostDB:ENSG00000114315"/>
<dbReference type="eggNOG" id="KOG4304">
    <property type="taxonomic scope" value="Eukaryota"/>
</dbReference>
<dbReference type="GeneTree" id="ENSGT00940000159619"/>
<dbReference type="HOGENOM" id="CLU_068550_1_0_1"/>
<dbReference type="InParanoid" id="Q14469"/>
<dbReference type="OMA" id="AMNYPAQ"/>
<dbReference type="OrthoDB" id="6085656at2759"/>
<dbReference type="PAN-GO" id="Q14469">
    <property type="GO annotations" value="9 GO annotations based on evolutionary models"/>
</dbReference>
<dbReference type="PhylomeDB" id="Q14469"/>
<dbReference type="TreeFam" id="TF351373"/>
<dbReference type="PathwayCommons" id="Q14469"/>
<dbReference type="Reactome" id="R-HSA-210744">
    <property type="pathway name" value="Regulation of gene expression in late stage (branching morphogenesis) pancreatic bud precursor cells"/>
</dbReference>
<dbReference type="Reactome" id="R-HSA-2122947">
    <property type="pathway name" value="NOTCH1 Intracellular Domain Regulates Transcription"/>
</dbReference>
<dbReference type="Reactome" id="R-HSA-2197563">
    <property type="pathway name" value="NOTCH2 intracellular domain regulates transcription"/>
</dbReference>
<dbReference type="Reactome" id="R-HSA-2644606">
    <property type="pathway name" value="Constitutive Signaling by NOTCH1 PEST Domain Mutants"/>
</dbReference>
<dbReference type="Reactome" id="R-HSA-2894862">
    <property type="pathway name" value="Constitutive Signaling by NOTCH1 HD+PEST Domain Mutants"/>
</dbReference>
<dbReference type="Reactome" id="R-HSA-8940973">
    <property type="pathway name" value="RUNX2 regulates osteoblast differentiation"/>
</dbReference>
<dbReference type="Reactome" id="R-HSA-8941856">
    <property type="pathway name" value="RUNX3 regulates NOTCH signaling"/>
</dbReference>
<dbReference type="Reactome" id="R-HSA-9013508">
    <property type="pathway name" value="NOTCH3 Intracellular Domain Regulates Transcription"/>
</dbReference>
<dbReference type="Reactome" id="R-HSA-9013695">
    <property type="pathway name" value="NOTCH4 Intracellular Domain Regulates Transcription"/>
</dbReference>
<dbReference type="SignaLink" id="Q14469"/>
<dbReference type="SIGNOR" id="Q14469"/>
<dbReference type="BioGRID-ORCS" id="3280">
    <property type="hits" value="34 hits in 1196 CRISPR screens"/>
</dbReference>
<dbReference type="ChiTaRS" id="HES1">
    <property type="organism name" value="human"/>
</dbReference>
<dbReference type="EvolutionaryTrace" id="Q14469"/>
<dbReference type="GeneWiki" id="HES1"/>
<dbReference type="GenomeRNAi" id="3280"/>
<dbReference type="Pharos" id="Q14469">
    <property type="development level" value="Tbio"/>
</dbReference>
<dbReference type="PRO" id="PR:Q14469"/>
<dbReference type="Proteomes" id="UP000005640">
    <property type="component" value="Chromosome 3"/>
</dbReference>
<dbReference type="RNAct" id="Q14469">
    <property type="molecule type" value="protein"/>
</dbReference>
<dbReference type="Bgee" id="ENSG00000114315">
    <property type="expression patterns" value="Expressed in renal medulla and 205 other cell types or tissues"/>
</dbReference>
<dbReference type="GO" id="GO:0000785">
    <property type="term" value="C:chromatin"/>
    <property type="evidence" value="ECO:0007669"/>
    <property type="project" value="Ensembl"/>
</dbReference>
<dbReference type="GO" id="GO:0005737">
    <property type="term" value="C:cytoplasm"/>
    <property type="evidence" value="ECO:0007669"/>
    <property type="project" value="Ensembl"/>
</dbReference>
<dbReference type="GO" id="GO:0016363">
    <property type="term" value="C:nuclear matrix"/>
    <property type="evidence" value="ECO:0007669"/>
    <property type="project" value="Ensembl"/>
</dbReference>
<dbReference type="GO" id="GO:0005654">
    <property type="term" value="C:nucleoplasm"/>
    <property type="evidence" value="ECO:0000314"/>
    <property type="project" value="HPA"/>
</dbReference>
<dbReference type="GO" id="GO:0005634">
    <property type="term" value="C:nucleus"/>
    <property type="evidence" value="ECO:0000250"/>
    <property type="project" value="UniProtKB"/>
</dbReference>
<dbReference type="GO" id="GO:0032991">
    <property type="term" value="C:protein-containing complex"/>
    <property type="evidence" value="ECO:0007669"/>
    <property type="project" value="Ensembl"/>
</dbReference>
<dbReference type="GO" id="GO:0003682">
    <property type="term" value="F:chromatin binding"/>
    <property type="evidence" value="ECO:0007669"/>
    <property type="project" value="Ensembl"/>
</dbReference>
<dbReference type="GO" id="GO:0003677">
    <property type="term" value="F:DNA binding"/>
    <property type="evidence" value="ECO:0000304"/>
    <property type="project" value="ProtInc"/>
</dbReference>
<dbReference type="GO" id="GO:0001227">
    <property type="term" value="F:DNA-binding transcription repressor activity, RNA polymerase II-specific"/>
    <property type="evidence" value="ECO:0000250"/>
    <property type="project" value="UniProtKB"/>
</dbReference>
<dbReference type="GO" id="GO:0070888">
    <property type="term" value="F:E-box binding"/>
    <property type="evidence" value="ECO:0000250"/>
    <property type="project" value="ARUK-UCL"/>
</dbReference>
<dbReference type="GO" id="GO:0042826">
    <property type="term" value="F:histone deacetylase binding"/>
    <property type="evidence" value="ECO:0000353"/>
    <property type="project" value="BHF-UCL"/>
</dbReference>
<dbReference type="GO" id="GO:0043398">
    <property type="term" value="F:HLH domain binding"/>
    <property type="evidence" value="ECO:0007669"/>
    <property type="project" value="Ensembl"/>
</dbReference>
<dbReference type="GO" id="GO:0008432">
    <property type="term" value="F:JUN kinase binding"/>
    <property type="evidence" value="ECO:0007669"/>
    <property type="project" value="Ensembl"/>
</dbReference>
<dbReference type="GO" id="GO:0071820">
    <property type="term" value="F:N-box binding"/>
    <property type="evidence" value="ECO:0000250"/>
    <property type="project" value="UniProtKB"/>
</dbReference>
<dbReference type="GO" id="GO:0042803">
    <property type="term" value="F:protein homodimerization activity"/>
    <property type="evidence" value="ECO:0000250"/>
    <property type="project" value="UniProtKB"/>
</dbReference>
<dbReference type="GO" id="GO:0044877">
    <property type="term" value="F:protein-containing complex binding"/>
    <property type="evidence" value="ECO:0007669"/>
    <property type="project" value="Ensembl"/>
</dbReference>
<dbReference type="GO" id="GO:0051087">
    <property type="term" value="F:protein-folding chaperone binding"/>
    <property type="evidence" value="ECO:0007669"/>
    <property type="project" value="Ensembl"/>
</dbReference>
<dbReference type="GO" id="GO:0061629">
    <property type="term" value="F:RNA polymerase II-specific DNA-binding transcription factor binding"/>
    <property type="evidence" value="ECO:0000250"/>
    <property type="project" value="ARUK-UCL"/>
</dbReference>
<dbReference type="GO" id="GO:0043565">
    <property type="term" value="F:sequence-specific DNA binding"/>
    <property type="evidence" value="ECO:0000250"/>
    <property type="project" value="UniProtKB"/>
</dbReference>
<dbReference type="GO" id="GO:1990837">
    <property type="term" value="F:sequence-specific double-stranded DNA binding"/>
    <property type="evidence" value="ECO:0000314"/>
    <property type="project" value="ARUK-UCL"/>
</dbReference>
<dbReference type="GO" id="GO:0001222">
    <property type="term" value="F:transcription corepressor binding"/>
    <property type="evidence" value="ECO:0007669"/>
    <property type="project" value="Ensembl"/>
</dbReference>
<dbReference type="GO" id="GO:0021984">
    <property type="term" value="P:adenohypophysis development"/>
    <property type="evidence" value="ECO:0007669"/>
    <property type="project" value="Ensembl"/>
</dbReference>
<dbReference type="GO" id="GO:0035881">
    <property type="term" value="P:amacrine cell differentiation"/>
    <property type="evidence" value="ECO:0007669"/>
    <property type="project" value="Ensembl"/>
</dbReference>
<dbReference type="GO" id="GO:0048844">
    <property type="term" value="P:artery morphogenesis"/>
    <property type="evidence" value="ECO:0000250"/>
    <property type="project" value="BHF-UCL"/>
</dbReference>
<dbReference type="GO" id="GO:0035910">
    <property type="term" value="P:ascending aorta morphogenesis"/>
    <property type="evidence" value="ECO:0000250"/>
    <property type="project" value="BHF-UCL"/>
</dbReference>
<dbReference type="GO" id="GO:0030509">
    <property type="term" value="P:BMP signaling pathway"/>
    <property type="evidence" value="ECO:0007669"/>
    <property type="project" value="Ensembl"/>
</dbReference>
<dbReference type="GO" id="GO:0021870">
    <property type="term" value="P:Cajal-Retzius cell differentiation"/>
    <property type="evidence" value="ECO:0007669"/>
    <property type="project" value="Ensembl"/>
</dbReference>
<dbReference type="GO" id="GO:0061309">
    <property type="term" value="P:cardiac neural crest cell development involved in outflow tract morphogenesis"/>
    <property type="evidence" value="ECO:0007669"/>
    <property type="project" value="Ensembl"/>
</dbReference>
<dbReference type="GO" id="GO:0007155">
    <property type="term" value="P:cell adhesion"/>
    <property type="evidence" value="ECO:0007669"/>
    <property type="project" value="Ensembl"/>
</dbReference>
<dbReference type="GO" id="GO:0001709">
    <property type="term" value="P:cell fate determination"/>
    <property type="evidence" value="ECO:0007669"/>
    <property type="project" value="Ensembl"/>
</dbReference>
<dbReference type="GO" id="GO:0048469">
    <property type="term" value="P:cell maturation"/>
    <property type="evidence" value="ECO:0007669"/>
    <property type="project" value="Ensembl"/>
</dbReference>
<dbReference type="GO" id="GO:0016477">
    <property type="term" value="P:cell migration"/>
    <property type="evidence" value="ECO:0007669"/>
    <property type="project" value="Ensembl"/>
</dbReference>
<dbReference type="GO" id="GO:0048667">
    <property type="term" value="P:cell morphogenesis involved in neuron differentiation"/>
    <property type="evidence" value="ECO:0007669"/>
    <property type="project" value="Ensembl"/>
</dbReference>
<dbReference type="GO" id="GO:0071398">
    <property type="term" value="P:cellular response to fatty acid"/>
    <property type="evidence" value="ECO:0007669"/>
    <property type="project" value="Ensembl"/>
</dbReference>
<dbReference type="GO" id="GO:0071347">
    <property type="term" value="P:cellular response to interleukin-1"/>
    <property type="evidence" value="ECO:0007669"/>
    <property type="project" value="Ensembl"/>
</dbReference>
<dbReference type="GO" id="GO:1990090">
    <property type="term" value="P:cellular response to nerve growth factor stimulus"/>
    <property type="evidence" value="ECO:0007669"/>
    <property type="project" value="Ensembl"/>
</dbReference>
<dbReference type="GO" id="GO:0071356">
    <property type="term" value="P:cellular response to tumor necrosis factor"/>
    <property type="evidence" value="ECO:0007669"/>
    <property type="project" value="Ensembl"/>
</dbReference>
<dbReference type="GO" id="GO:0090102">
    <property type="term" value="P:cochlea development"/>
    <property type="evidence" value="ECO:0007669"/>
    <property type="project" value="Ensembl"/>
</dbReference>
<dbReference type="GO" id="GO:0072049">
    <property type="term" value="P:comma-shaped body morphogenesis"/>
    <property type="evidence" value="ECO:0007669"/>
    <property type="project" value="Ensembl"/>
</dbReference>
<dbReference type="GO" id="GO:0061009">
    <property type="term" value="P:common bile duct development"/>
    <property type="evidence" value="ECO:0007669"/>
    <property type="project" value="Ensembl"/>
</dbReference>
<dbReference type="GO" id="GO:0003143">
    <property type="term" value="P:embryonic heart tube morphogenesis"/>
    <property type="evidence" value="ECO:0000250"/>
    <property type="project" value="BHF-UCL"/>
</dbReference>
<dbReference type="GO" id="GO:0090162">
    <property type="term" value="P:establishment of epithelial cell polarity"/>
    <property type="evidence" value="ECO:0007669"/>
    <property type="project" value="Ensembl"/>
</dbReference>
<dbReference type="GO" id="GO:0021861">
    <property type="term" value="P:forebrain radial glial cell differentiation"/>
    <property type="evidence" value="ECO:0000250"/>
    <property type="project" value="UniProtKB"/>
</dbReference>
<dbReference type="GO" id="GO:0072012">
    <property type="term" value="P:glomerulus vasculature development"/>
    <property type="evidence" value="ECO:0007669"/>
    <property type="project" value="Ensembl"/>
</dbReference>
<dbReference type="GO" id="GO:0021575">
    <property type="term" value="P:hindbrain morphogenesis"/>
    <property type="evidence" value="ECO:0007669"/>
    <property type="project" value="Ensembl"/>
</dbReference>
<dbReference type="GO" id="GO:0042491">
    <property type="term" value="P:inner ear auditory receptor cell differentiation"/>
    <property type="evidence" value="ECO:0007669"/>
    <property type="project" value="Ensembl"/>
</dbReference>
<dbReference type="GO" id="GO:0060122">
    <property type="term" value="P:inner ear receptor cell stereocilium organization"/>
    <property type="evidence" value="ECO:0007669"/>
    <property type="project" value="Ensembl"/>
</dbReference>
<dbReference type="GO" id="GO:0060716">
    <property type="term" value="P:labyrinthine layer blood vessel development"/>
    <property type="evidence" value="ECO:0007669"/>
    <property type="project" value="Ensembl"/>
</dbReference>
<dbReference type="GO" id="GO:0046331">
    <property type="term" value="P:lateral inhibition"/>
    <property type="evidence" value="ECO:0007669"/>
    <property type="project" value="Ensembl"/>
</dbReference>
<dbReference type="GO" id="GO:0001889">
    <property type="term" value="P:liver development"/>
    <property type="evidence" value="ECO:0007669"/>
    <property type="project" value="Ensembl"/>
</dbReference>
<dbReference type="GO" id="GO:0030324">
    <property type="term" value="P:lung development"/>
    <property type="evidence" value="ECO:0007669"/>
    <property type="project" value="Ensembl"/>
</dbReference>
<dbReference type="GO" id="GO:0072282">
    <property type="term" value="P:metanephric nephron tubule morphogenesis"/>
    <property type="evidence" value="ECO:0007669"/>
    <property type="project" value="Ensembl"/>
</dbReference>
<dbReference type="GO" id="GO:0030901">
    <property type="term" value="P:midbrain development"/>
    <property type="evidence" value="ECO:0007669"/>
    <property type="project" value="Ensembl"/>
</dbReference>
<dbReference type="GO" id="GO:0021555">
    <property type="term" value="P:midbrain-hindbrain boundary morphogenesis"/>
    <property type="evidence" value="ECO:0007669"/>
    <property type="project" value="Ensembl"/>
</dbReference>
<dbReference type="GO" id="GO:1902870">
    <property type="term" value="P:negative regulation of amacrine cell differentiation"/>
    <property type="evidence" value="ECO:0007669"/>
    <property type="project" value="Ensembl"/>
</dbReference>
<dbReference type="GO" id="GO:0090281">
    <property type="term" value="P:negative regulation of calcium ion import"/>
    <property type="evidence" value="ECO:0007669"/>
    <property type="project" value="Ensembl"/>
</dbReference>
<dbReference type="GO" id="GO:1905934">
    <property type="term" value="P:negative regulation of cell fate determination"/>
    <property type="evidence" value="ECO:0007669"/>
    <property type="project" value="Ensembl"/>
</dbReference>
<dbReference type="GO" id="GO:0045892">
    <property type="term" value="P:negative regulation of DNA-templated transcription"/>
    <property type="evidence" value="ECO:0000314"/>
    <property type="project" value="BHF-UCL"/>
</dbReference>
<dbReference type="GO" id="GO:2000978">
    <property type="term" value="P:negative regulation of forebrain neuron differentiation"/>
    <property type="evidence" value="ECO:0000250"/>
    <property type="project" value="UniProtKB"/>
</dbReference>
<dbReference type="GO" id="GO:0010629">
    <property type="term" value="P:negative regulation of gene expression"/>
    <property type="evidence" value="ECO:0007669"/>
    <property type="project" value="Ensembl"/>
</dbReference>
<dbReference type="GO" id="GO:0060253">
    <property type="term" value="P:negative regulation of glial cell proliferation"/>
    <property type="evidence" value="ECO:0000250"/>
    <property type="project" value="UniProtKB"/>
</dbReference>
<dbReference type="GO" id="GO:0045608">
    <property type="term" value="P:negative regulation of inner ear auditory receptor cell differentiation"/>
    <property type="evidence" value="ECO:0007669"/>
    <property type="project" value="Ensembl"/>
</dbReference>
<dbReference type="GO" id="GO:0045665">
    <property type="term" value="P:negative regulation of neuron differentiation"/>
    <property type="evidence" value="ECO:0000318"/>
    <property type="project" value="GO_Central"/>
</dbReference>
<dbReference type="GO" id="GO:0010977">
    <property type="term" value="P:negative regulation of neuron projection development"/>
    <property type="evidence" value="ECO:0007669"/>
    <property type="project" value="Ensembl"/>
</dbReference>
<dbReference type="GO" id="GO:0048715">
    <property type="term" value="P:negative regulation of oligodendrocyte differentiation"/>
    <property type="evidence" value="ECO:0000250"/>
    <property type="project" value="UniProtKB"/>
</dbReference>
<dbReference type="GO" id="GO:2000227">
    <property type="term" value="P:negative regulation of pancreatic A cell differentiation"/>
    <property type="evidence" value="ECO:0007669"/>
    <property type="project" value="Ensembl"/>
</dbReference>
<dbReference type="GO" id="GO:2000974">
    <property type="term" value="P:negative regulation of pro-B cell differentiation"/>
    <property type="evidence" value="ECO:0000315"/>
    <property type="project" value="UniProtKB"/>
</dbReference>
<dbReference type="GO" id="GO:2000737">
    <property type="term" value="P:negative regulation of stem cell differentiation"/>
    <property type="evidence" value="ECO:0000315"/>
    <property type="project" value="UniProtKB"/>
</dbReference>
<dbReference type="GO" id="GO:0061106">
    <property type="term" value="P:negative regulation of stomach neuroendocrine cell differentiation"/>
    <property type="evidence" value="ECO:0007669"/>
    <property type="project" value="Ensembl"/>
</dbReference>
<dbReference type="GO" id="GO:0000122">
    <property type="term" value="P:negative regulation of transcription by RNA polymerase II"/>
    <property type="evidence" value="ECO:0000314"/>
    <property type="project" value="UniProtKB"/>
</dbReference>
<dbReference type="GO" id="GO:0007399">
    <property type="term" value="P:nervous system development"/>
    <property type="evidence" value="ECO:0000304"/>
    <property type="project" value="ProtInc"/>
</dbReference>
<dbReference type="GO" id="GO:0097150">
    <property type="term" value="P:neuronal stem cell population maintenance"/>
    <property type="evidence" value="ECO:0000270"/>
    <property type="project" value="UniProtKB"/>
</dbReference>
<dbReference type="GO" id="GO:0007219">
    <property type="term" value="P:Notch signaling pathway"/>
    <property type="evidence" value="ECO:0000314"/>
    <property type="project" value="UniProtKB"/>
</dbReference>
<dbReference type="GO" id="GO:0021557">
    <property type="term" value="P:oculomotor nerve development"/>
    <property type="evidence" value="ECO:0007669"/>
    <property type="project" value="Ensembl"/>
</dbReference>
<dbReference type="GO" id="GO:0003151">
    <property type="term" value="P:outflow tract morphogenesis"/>
    <property type="evidence" value="ECO:0000250"/>
    <property type="project" value="BHF-UCL"/>
</dbReference>
<dbReference type="GO" id="GO:0003310">
    <property type="term" value="P:pancreatic A cell differentiation"/>
    <property type="evidence" value="ECO:0007669"/>
    <property type="project" value="Ensembl"/>
</dbReference>
<dbReference type="GO" id="GO:0061626">
    <property type="term" value="P:pharyngeal arch artery morphogenesis"/>
    <property type="evidence" value="ECO:0000250"/>
    <property type="project" value="BHF-UCL"/>
</dbReference>
<dbReference type="GO" id="GO:0048711">
    <property type="term" value="P:positive regulation of astrocyte differentiation"/>
    <property type="evidence" value="ECO:0000250"/>
    <property type="project" value="UniProtKB"/>
</dbReference>
<dbReference type="GO" id="GO:0030513">
    <property type="term" value="P:positive regulation of BMP signaling pathway"/>
    <property type="evidence" value="ECO:0007669"/>
    <property type="project" value="Ensembl"/>
</dbReference>
<dbReference type="GO" id="GO:0008284">
    <property type="term" value="P:positive regulation of cell population proliferation"/>
    <property type="evidence" value="ECO:0000250"/>
    <property type="project" value="BHF-UCL"/>
</dbReference>
<dbReference type="GO" id="GO:0043388">
    <property type="term" value="P:positive regulation of DNA binding"/>
    <property type="evidence" value="ECO:0000250"/>
    <property type="project" value="UniProtKB"/>
</dbReference>
<dbReference type="GO" id="GO:0010628">
    <property type="term" value="P:positive regulation of gene expression"/>
    <property type="evidence" value="ECO:0007669"/>
    <property type="project" value="Ensembl"/>
</dbReference>
<dbReference type="GO" id="GO:0045977">
    <property type="term" value="P:positive regulation of mitotic cell cycle, embryonic"/>
    <property type="evidence" value="ECO:0000250"/>
    <property type="project" value="BHF-UCL"/>
</dbReference>
<dbReference type="GO" id="GO:0045747">
    <property type="term" value="P:positive regulation of Notch signaling pathway"/>
    <property type="evidence" value="ECO:0007669"/>
    <property type="project" value="Ensembl"/>
</dbReference>
<dbReference type="GO" id="GO:0046427">
    <property type="term" value="P:positive regulation of receptor signaling pathway via JAK-STAT"/>
    <property type="evidence" value="ECO:0000250"/>
    <property type="project" value="UniProtKB"/>
</dbReference>
<dbReference type="GO" id="GO:0042102">
    <property type="term" value="P:positive regulation of T cell proliferation"/>
    <property type="evidence" value="ECO:0007669"/>
    <property type="project" value="Ensembl"/>
</dbReference>
<dbReference type="GO" id="GO:0045944">
    <property type="term" value="P:positive regulation of transcription by RNA polymerase II"/>
    <property type="evidence" value="ECO:0000250"/>
    <property type="project" value="BHF-UCL"/>
</dbReference>
<dbReference type="GO" id="GO:0042531">
    <property type="term" value="P:positive regulation of tyrosine phosphorylation of STAT protein"/>
    <property type="evidence" value="ECO:0000250"/>
    <property type="project" value="UniProtKB"/>
</dbReference>
<dbReference type="GO" id="GO:0065003">
    <property type="term" value="P:protein-containing complex assembly"/>
    <property type="evidence" value="ECO:0000250"/>
    <property type="project" value="UniProtKB"/>
</dbReference>
<dbReference type="GO" id="GO:0050678">
    <property type="term" value="P:regulation of epithelial cell proliferation"/>
    <property type="evidence" value="ECO:0007669"/>
    <property type="project" value="Ensembl"/>
</dbReference>
<dbReference type="GO" id="GO:0045598">
    <property type="term" value="P:regulation of fat cell differentiation"/>
    <property type="evidence" value="ECO:0007669"/>
    <property type="project" value="Ensembl"/>
</dbReference>
<dbReference type="GO" id="GO:0050767">
    <property type="term" value="P:regulation of neurogenesis"/>
    <property type="evidence" value="ECO:0000318"/>
    <property type="project" value="GO_Central"/>
</dbReference>
<dbReference type="GO" id="GO:0043254">
    <property type="term" value="P:regulation of protein-containing complex assembly"/>
    <property type="evidence" value="ECO:0007669"/>
    <property type="project" value="Ensembl"/>
</dbReference>
<dbReference type="GO" id="GO:0046425">
    <property type="term" value="P:regulation of receptor signaling pathway via JAK-STAT"/>
    <property type="evidence" value="ECO:0000250"/>
    <property type="project" value="UniProtKB"/>
</dbReference>
<dbReference type="GO" id="GO:0003266">
    <property type="term" value="P:regulation of secondary heart field cardioblast proliferation"/>
    <property type="evidence" value="ECO:0007669"/>
    <property type="project" value="Ensembl"/>
</dbReference>
<dbReference type="GO" id="GO:0060164">
    <property type="term" value="P:regulation of timing of neuron differentiation"/>
    <property type="evidence" value="ECO:0007669"/>
    <property type="project" value="Ensembl"/>
</dbReference>
<dbReference type="GO" id="GO:0072141">
    <property type="term" value="P:renal interstitial fibroblast development"/>
    <property type="evidence" value="ECO:0007669"/>
    <property type="project" value="Ensembl"/>
</dbReference>
<dbReference type="GO" id="GO:0043279">
    <property type="term" value="P:response to alkaloid"/>
    <property type="evidence" value="ECO:0007669"/>
    <property type="project" value="Ensembl"/>
</dbReference>
<dbReference type="GO" id="GO:0097066">
    <property type="term" value="P:response to thyroid hormone"/>
    <property type="evidence" value="ECO:0007669"/>
    <property type="project" value="Ensembl"/>
</dbReference>
<dbReference type="GO" id="GO:0009615">
    <property type="term" value="P:response to virus"/>
    <property type="evidence" value="ECO:0007669"/>
    <property type="project" value="Ensembl"/>
</dbReference>
<dbReference type="GO" id="GO:0072050">
    <property type="term" value="P:S-shaped body morphogenesis"/>
    <property type="evidence" value="ECO:0007669"/>
    <property type="project" value="Ensembl"/>
</dbReference>
<dbReference type="GO" id="GO:0007224">
    <property type="term" value="P:smoothened signaling pathway"/>
    <property type="evidence" value="ECO:0007669"/>
    <property type="project" value="Ensembl"/>
</dbReference>
<dbReference type="GO" id="GO:0035019">
    <property type="term" value="P:somatic stem cell population maintenance"/>
    <property type="evidence" value="ECO:0007669"/>
    <property type="project" value="Ensembl"/>
</dbReference>
<dbReference type="GO" id="GO:0061102">
    <property type="term" value="P:stomach neuroendocrine cell differentiation"/>
    <property type="evidence" value="ECO:0007669"/>
    <property type="project" value="Ensembl"/>
</dbReference>
<dbReference type="GO" id="GO:0042098">
    <property type="term" value="P:T cell proliferation"/>
    <property type="evidence" value="ECO:0007669"/>
    <property type="project" value="Ensembl"/>
</dbReference>
<dbReference type="GO" id="GO:0021537">
    <property type="term" value="P:telencephalon development"/>
    <property type="evidence" value="ECO:0007669"/>
    <property type="project" value="Ensembl"/>
</dbReference>
<dbReference type="GO" id="GO:0048538">
    <property type="term" value="P:thymus development"/>
    <property type="evidence" value="ECO:0000250"/>
    <property type="project" value="BHF-UCL"/>
</dbReference>
<dbReference type="GO" id="GO:0021558">
    <property type="term" value="P:trochlear nerve development"/>
    <property type="evidence" value="ECO:0007669"/>
    <property type="project" value="Ensembl"/>
</dbReference>
<dbReference type="GO" id="GO:0060675">
    <property type="term" value="P:ureteric bud morphogenesis"/>
    <property type="evidence" value="ECO:0007669"/>
    <property type="project" value="Ensembl"/>
</dbReference>
<dbReference type="GO" id="GO:0097084">
    <property type="term" value="P:vascular associated smooth muscle cell development"/>
    <property type="evidence" value="ECO:0000250"/>
    <property type="project" value="BHF-UCL"/>
</dbReference>
<dbReference type="GO" id="GO:0003281">
    <property type="term" value="P:ventricular septum development"/>
    <property type="evidence" value="ECO:0000250"/>
    <property type="project" value="BHF-UCL"/>
</dbReference>
<dbReference type="GO" id="GO:0060412">
    <property type="term" value="P:ventricular septum morphogenesis"/>
    <property type="evidence" value="ECO:0000250"/>
    <property type="project" value="BHF-UCL"/>
</dbReference>
<dbReference type="CDD" id="cd11459">
    <property type="entry name" value="bHLH-O_HES1_4"/>
    <property type="match status" value="1"/>
</dbReference>
<dbReference type="FunFam" id="4.10.280.10:FF:000009">
    <property type="entry name" value="Transcription factor HES-1"/>
    <property type="match status" value="1"/>
</dbReference>
<dbReference type="Gene3D" id="6.10.250.980">
    <property type="match status" value="1"/>
</dbReference>
<dbReference type="Gene3D" id="4.10.280.10">
    <property type="entry name" value="Helix-loop-helix DNA-binding domain"/>
    <property type="match status" value="1"/>
</dbReference>
<dbReference type="IDEAL" id="IID00211"/>
<dbReference type="InterPro" id="IPR011598">
    <property type="entry name" value="bHLH_dom"/>
</dbReference>
<dbReference type="InterPro" id="IPR050370">
    <property type="entry name" value="HES_HEY"/>
</dbReference>
<dbReference type="InterPro" id="IPR036638">
    <property type="entry name" value="HLH_DNA-bd_sf"/>
</dbReference>
<dbReference type="InterPro" id="IPR003650">
    <property type="entry name" value="Orange_dom"/>
</dbReference>
<dbReference type="PANTHER" id="PTHR10985">
    <property type="entry name" value="BASIC HELIX-LOOP-HELIX TRANSCRIPTION FACTOR, HES-RELATED"/>
    <property type="match status" value="1"/>
</dbReference>
<dbReference type="Pfam" id="PF07527">
    <property type="entry name" value="Hairy_orange"/>
    <property type="match status" value="1"/>
</dbReference>
<dbReference type="Pfam" id="PF00010">
    <property type="entry name" value="HLH"/>
    <property type="match status" value="1"/>
</dbReference>
<dbReference type="SMART" id="SM00353">
    <property type="entry name" value="HLH"/>
    <property type="match status" value="1"/>
</dbReference>
<dbReference type="SMART" id="SM00511">
    <property type="entry name" value="ORANGE"/>
    <property type="match status" value="1"/>
</dbReference>
<dbReference type="SUPFAM" id="SSF47459">
    <property type="entry name" value="HLH, helix-loop-helix DNA-binding domain"/>
    <property type="match status" value="1"/>
</dbReference>
<dbReference type="SUPFAM" id="SSF158457">
    <property type="entry name" value="Orange domain-like"/>
    <property type="match status" value="1"/>
</dbReference>
<dbReference type="PROSITE" id="PS50888">
    <property type="entry name" value="BHLH"/>
    <property type="match status" value="1"/>
</dbReference>
<dbReference type="PROSITE" id="PS51054">
    <property type="entry name" value="ORANGE"/>
    <property type="match status" value="1"/>
</dbReference>
<feature type="chain" id="PRO_0000127202" description="Transcription factor HES-1">
    <location>
        <begin position="1"/>
        <end position="280"/>
    </location>
</feature>
<feature type="domain" description="bHLH" evidence="3">
    <location>
        <begin position="34"/>
        <end position="91"/>
    </location>
</feature>
<feature type="domain" description="Orange" evidence="2">
    <location>
        <begin position="110"/>
        <end position="143"/>
    </location>
</feature>
<feature type="region of interest" description="Disordered" evidence="4">
    <location>
        <begin position="1"/>
        <end position="44"/>
    </location>
</feature>
<feature type="region of interest" description="Disordered" evidence="4">
    <location>
        <begin position="157"/>
        <end position="200"/>
    </location>
</feature>
<feature type="region of interest" description="Disordered" evidence="4">
    <location>
        <begin position="254"/>
        <end position="280"/>
    </location>
</feature>
<feature type="short sequence motif" description="WRPW motif">
    <location>
        <begin position="275"/>
        <end position="278"/>
    </location>
</feature>
<feature type="compositionally biased region" description="Low complexity" evidence="4">
    <location>
        <begin position="10"/>
        <end position="21"/>
    </location>
</feature>
<feature type="compositionally biased region" description="Basic and acidic residues" evidence="4">
    <location>
        <begin position="26"/>
        <end position="35"/>
    </location>
</feature>
<feature type="compositionally biased region" description="Pro residues" evidence="4">
    <location>
        <begin position="164"/>
        <end position="174"/>
    </location>
</feature>
<feature type="compositionally biased region" description="Pro residues" evidence="4">
    <location>
        <begin position="181"/>
        <end position="200"/>
    </location>
</feature>
<feature type="compositionally biased region" description="Polar residues" evidence="4">
    <location>
        <begin position="254"/>
        <end position="271"/>
    </location>
</feature>
<feature type="strand" evidence="8">
    <location>
        <begin position="31"/>
        <end position="33"/>
    </location>
</feature>
<feature type="helix" evidence="8">
    <location>
        <begin position="40"/>
        <end position="65"/>
    </location>
</feature>
<feature type="helix" evidence="8">
    <location>
        <begin position="71"/>
        <end position="73"/>
    </location>
</feature>
<feature type="helix" evidence="8">
    <location>
        <begin position="77"/>
        <end position="93"/>
    </location>
</feature>
<feature type="helix" evidence="9">
    <location>
        <begin position="104"/>
        <end position="125"/>
    </location>
</feature>
<feature type="helix" evidence="9">
    <location>
        <begin position="133"/>
        <end position="149"/>
    </location>
</feature>
<protein>
    <recommendedName>
        <fullName>Transcription factor HES-1</fullName>
    </recommendedName>
    <alternativeName>
        <fullName>Class B basic helix-loop-helix protein 39</fullName>
        <shortName>bHLHb39</shortName>
    </alternativeName>
    <alternativeName>
        <fullName>Hairy and enhancer of split 1</fullName>
    </alternativeName>
    <alternativeName>
        <fullName>Hairy homolog</fullName>
    </alternativeName>
    <alternativeName>
        <fullName>Hairy-like protein</fullName>
        <shortName>hHL</shortName>
    </alternativeName>
</protein>
<comment type="function">
    <text evidence="1 6">Transcriptional repressor of genes that require a bHLH protein for their transcription. May act as a negative regulator of myogenesis by inhibiting the functions of MYOD1 and ASH1. Binds DNA on N-box motifs: 5'-CACNAG-3' with high affinity and on E-box motifs: 5'-CANNTG-3' with low affinity (By similarity). May play a role in a functional FA core complex response to DNA cross-link damage, being required for the stability and nuclear localization of FA core complex proteins, as well as for FANCD2 monoubiquitination in response to DNA damage.</text>
</comment>
<comment type="subunit">
    <text evidence="1 5 6">Transcription repression requires formation of a complex with a corepressor protein of the Groucho/TLE family. Interacts (via WPRW motif) with TLE1, and more weakly with TLE2. Interacts with HES6 (By similarity). Interacts with SIRT1. Interacts with an FA complex, composed of FANCA, FANCF, FANCG and FANCL, but not of FANCC, nor FANCE.</text>
</comment>
<comment type="interaction">
    <interactant intactId="EBI-2832522">
        <id>Q14469</id>
    </interactant>
    <interactant intactId="EBI-1802965">
        <id>Q96EB6</id>
        <label>SIRT1</label>
    </interactant>
    <organismsDiffer>false</organismsDiffer>
    <experiments>4</experiments>
</comment>
<comment type="subcellular location">
    <subcellularLocation>
        <location evidence="7">Nucleus</location>
    </subcellularLocation>
</comment>
<comment type="domain">
    <text>Has a particular type of basic domain (presence of a helix-interrupting proline) that binds to the N-box (CACNAG), rather than the canonical E-box (CANNTG).</text>
</comment>
<comment type="domain">
    <text evidence="1">The C-terminal WRPW motif is a transcriptional repression domain necessary for the interaction with Groucho/TLE family members, transcriptional corepressors recruited to specific target DNA by Hairy-related proteins.</text>
</comment>
<comment type="domain">
    <text evidence="1">The bHLH, as well as cooperation between the central Orange domain and the C-terminal WRPW motif, is required for transcriptional repressor activity.</text>
</comment>
<comment type="PTM">
    <text evidence="7">(Microbial infection) Ubiquitinated via human cytomegalovirus/HCMV protein IE1 that assembles a HES1 ubiquitination complex; leading to HES1 proteasomal degradation.</text>
</comment>
<organism>
    <name type="scientific">Homo sapiens</name>
    <name type="common">Human</name>
    <dbReference type="NCBI Taxonomy" id="9606"/>
    <lineage>
        <taxon>Eukaryota</taxon>
        <taxon>Metazoa</taxon>
        <taxon>Chordata</taxon>
        <taxon>Craniata</taxon>
        <taxon>Vertebrata</taxon>
        <taxon>Euteleostomi</taxon>
        <taxon>Mammalia</taxon>
        <taxon>Eutheria</taxon>
        <taxon>Euarchontoglires</taxon>
        <taxon>Primates</taxon>
        <taxon>Haplorrhini</taxon>
        <taxon>Catarrhini</taxon>
        <taxon>Hominidae</taxon>
        <taxon>Homo</taxon>
    </lineage>
</organism>
<sequence length="280" mass="29541">MPADIMEKNSSSPVAATPASVNTTPDKPKTASEHRKSSKPIMEKRRRARINESLSQLKTLILDALKKDSSRHSKLEKADILEMTVKHLRNLQRAQMTAALSTDPSVLGKYRAGFSECMNEVTRFLSTCEGVNTEVRTRLLGHLANCMTQINAMTYPGQPHPALQAPPPPPPGPGGPQHAPFAPPPPLVPIPGGAAPPPGGAPCKLGSQAGEAAKVFGGFQVVPAPDGQFAFLIPNGAFAHSGPVIPVYTSNSGTSVGPNAVSPSSGPSLTADSMWRPWRN</sequence>
<accession>Q14469</accession>
<accession>Q6FHB2</accession>
<keyword id="KW-0002">3D-structure</keyword>
<keyword id="KW-0238">DNA-binding</keyword>
<keyword id="KW-0539">Nucleus</keyword>
<keyword id="KW-1267">Proteomics identification</keyword>
<keyword id="KW-1185">Reference proteome</keyword>
<keyword id="KW-0678">Repressor</keyword>
<keyword id="KW-0804">Transcription</keyword>
<keyword id="KW-0805">Transcription regulation</keyword>
<keyword id="KW-0832">Ubl conjugation</keyword>
<evidence type="ECO:0000250" key="1"/>
<evidence type="ECO:0000255" key="2">
    <source>
        <dbReference type="PROSITE-ProRule" id="PRU00380"/>
    </source>
</evidence>
<evidence type="ECO:0000255" key="3">
    <source>
        <dbReference type="PROSITE-ProRule" id="PRU00981"/>
    </source>
</evidence>
<evidence type="ECO:0000256" key="4">
    <source>
        <dbReference type="SAM" id="MobiDB-lite"/>
    </source>
</evidence>
<evidence type="ECO:0000269" key="5">
    <source>
    </source>
</evidence>
<evidence type="ECO:0000269" key="6">
    <source>
    </source>
</evidence>
<evidence type="ECO:0000269" key="7">
    <source>
    </source>
</evidence>
<evidence type="ECO:0007829" key="8">
    <source>
        <dbReference type="PDB" id="2MH3"/>
    </source>
</evidence>
<evidence type="ECO:0007829" key="9">
    <source>
        <dbReference type="PDB" id="7C4O"/>
    </source>
</evidence>